<protein>
    <recommendedName>
        <fullName>Late cornified envelope-like proline-rich protein 1</fullName>
    </recommendedName>
</protein>
<dbReference type="EMBL" id="AB168240">
    <property type="protein sequence ID" value="BAE00365.1"/>
    <property type="molecule type" value="mRNA"/>
</dbReference>
<dbReference type="RefSeq" id="NP_001271968.1">
    <property type="nucleotide sequence ID" value="NM_001285039.1"/>
</dbReference>
<dbReference type="RefSeq" id="XP_045245429.1">
    <property type="nucleotide sequence ID" value="XM_045389494.2"/>
</dbReference>
<dbReference type="SMR" id="Q4R956"/>
<dbReference type="GeneID" id="101926864"/>
<dbReference type="eggNOG" id="ENOG502RTZC">
    <property type="taxonomic scope" value="Eukaryota"/>
</dbReference>
<dbReference type="Proteomes" id="UP000233100">
    <property type="component" value="Unplaced"/>
</dbReference>
<dbReference type="InterPro" id="IPR026076">
    <property type="entry name" value="Lelp1"/>
</dbReference>
<dbReference type="Pfam" id="PF15042">
    <property type="entry name" value="LELP1"/>
    <property type="match status" value="1"/>
</dbReference>
<dbReference type="PRINTS" id="PR00021">
    <property type="entry name" value="PRORICH"/>
</dbReference>
<accession>Q4R956</accession>
<organism>
    <name type="scientific">Macaca fascicularis</name>
    <name type="common">Crab-eating macaque</name>
    <name type="synonym">Cynomolgus monkey</name>
    <dbReference type="NCBI Taxonomy" id="9541"/>
    <lineage>
        <taxon>Eukaryota</taxon>
        <taxon>Metazoa</taxon>
        <taxon>Chordata</taxon>
        <taxon>Craniata</taxon>
        <taxon>Vertebrata</taxon>
        <taxon>Euteleostomi</taxon>
        <taxon>Mammalia</taxon>
        <taxon>Eutheria</taxon>
        <taxon>Euarchontoglires</taxon>
        <taxon>Primates</taxon>
        <taxon>Haplorrhini</taxon>
        <taxon>Catarrhini</taxon>
        <taxon>Cercopithecidae</taxon>
        <taxon>Cercopithecinae</taxon>
        <taxon>Macaca</taxon>
    </lineage>
</organism>
<name>LELP1_MACFA</name>
<gene>
    <name type="primary">LELP1</name>
    <name type="ORF">QtsA-10672</name>
</gene>
<feature type="chain" id="PRO_0000271604" description="Late cornified envelope-like proline-rich protein 1">
    <location>
        <begin position="1"/>
        <end position="94"/>
    </location>
</feature>
<feature type="region of interest" description="Disordered" evidence="1">
    <location>
        <begin position="1"/>
        <end position="26"/>
    </location>
</feature>
<feature type="region of interest" description="Disordered" evidence="1">
    <location>
        <begin position="47"/>
        <end position="94"/>
    </location>
</feature>
<feature type="compositionally biased region" description="Pro residues" evidence="1">
    <location>
        <begin position="53"/>
        <end position="94"/>
    </location>
</feature>
<proteinExistence type="inferred from homology"/>
<keyword id="KW-1185">Reference proteome</keyword>
<sequence>MSSDDKSKSNDPKTEPKNCDPKCEQKCESKCQPSCLKKLLQRCSEKCPREKCPAPPKCPPCPSPSPSSCPPKPCAKPCPPKCPSSCPPPCPPPE</sequence>
<comment type="similarity">
    <text evidence="2">Belongs to the cornifin (SPRR) family.</text>
</comment>
<evidence type="ECO:0000256" key="1">
    <source>
        <dbReference type="SAM" id="MobiDB-lite"/>
    </source>
</evidence>
<evidence type="ECO:0000305" key="2"/>
<reference key="1">
    <citation type="submission" date="2005-06" db="EMBL/GenBank/DDBJ databases">
        <title>DNA sequences of macaque genes expressed in brain or testis and its evolutionary implications.</title>
        <authorList>
            <consortium name="International consortium for macaque cDNA sequencing and analysis"/>
        </authorList>
    </citation>
    <scope>NUCLEOTIDE SEQUENCE [LARGE SCALE MRNA]</scope>
    <source>
        <tissue>Testis</tissue>
    </source>
</reference>